<keyword id="KW-0067">ATP-binding</keyword>
<keyword id="KW-1003">Cell membrane</keyword>
<keyword id="KW-0378">Hydrolase</keyword>
<keyword id="KW-0418">Kinase</keyword>
<keyword id="KW-0460">Magnesium</keyword>
<keyword id="KW-0464">Manganese</keyword>
<keyword id="KW-0472">Membrane</keyword>
<keyword id="KW-0547">Nucleotide-binding</keyword>
<keyword id="KW-0597">Phosphoprotein</keyword>
<keyword id="KW-0904">Protein phosphatase</keyword>
<keyword id="KW-1185">Reference proteome</keyword>
<keyword id="KW-0346">Stress response</keyword>
<keyword id="KW-0808">Transferase</keyword>
<keyword id="KW-0812">Transmembrane</keyword>
<keyword id="KW-1133">Transmembrane helix</keyword>
<keyword id="KW-0902">Two-component regulatory system</keyword>
<keyword id="KW-0843">Virulence</keyword>
<comment type="function">
    <text evidence="1">Member of the two-component regulatory system MprB/MprA which contributes to maintaining a balance among several systems involved in stress resistance and is required for establishment and maintenance of persistent infection in the host. In response to environmental signals MprB acts both as a membrane-associated protein kinase that undergoes autophosphorylation and subsequently transfers the phosphate to MprA, and a protein phosphatase that dephosphorylates phospho-MprA (By similarity).</text>
</comment>
<comment type="catalytic activity">
    <reaction>
        <text>ATP + protein L-histidine = ADP + protein N-phospho-L-histidine.</text>
        <dbReference type="EC" id="2.7.13.3"/>
    </reaction>
</comment>
<comment type="cofactor">
    <cofactor evidence="1">
        <name>Mg(2+)</name>
        <dbReference type="ChEBI" id="CHEBI:18420"/>
    </cofactor>
    <cofactor evidence="1">
        <name>Mn(2+)</name>
        <dbReference type="ChEBI" id="CHEBI:29035"/>
    </cofactor>
</comment>
<comment type="subcellular location">
    <subcellularLocation>
        <location evidence="6">Cell membrane</location>
        <topology evidence="6">Multi-pass membrane protein</topology>
    </subcellularLocation>
</comment>
<comment type="PTM">
    <text evidence="1">Autophosphorylated.</text>
</comment>
<proteinExistence type="inferred from homology"/>
<organism>
    <name type="scientific">Mycobacterium tuberculosis (strain ATCC 25177 / H37Ra)</name>
    <dbReference type="NCBI Taxonomy" id="419947"/>
    <lineage>
        <taxon>Bacteria</taxon>
        <taxon>Bacillati</taxon>
        <taxon>Actinomycetota</taxon>
        <taxon>Actinomycetes</taxon>
        <taxon>Mycobacteriales</taxon>
        <taxon>Mycobacteriaceae</taxon>
        <taxon>Mycobacterium</taxon>
        <taxon>Mycobacterium tuberculosis complex</taxon>
    </lineage>
</organism>
<accession>A5U124</accession>
<name>MPRB_MYCTA</name>
<evidence type="ECO:0000250" key="1"/>
<evidence type="ECO:0000255" key="2"/>
<evidence type="ECO:0000255" key="3">
    <source>
        <dbReference type="PROSITE-ProRule" id="PRU00102"/>
    </source>
</evidence>
<evidence type="ECO:0000255" key="4">
    <source>
        <dbReference type="PROSITE-ProRule" id="PRU00107"/>
    </source>
</evidence>
<evidence type="ECO:0000256" key="5">
    <source>
        <dbReference type="SAM" id="MobiDB-lite"/>
    </source>
</evidence>
<evidence type="ECO:0000305" key="6"/>
<sequence>MWWFRRRDRAPLRATSSLSLRWRVMLLAMSMVAMVVVLMSFAVYAVISAALYSDIDNQLQSRAQLLIASGSLAADPGKAIEGTAYSDVNAMLVNPGQSIYTAQQPGQTLPVGAAEKAVIRGELFMSRRTTADQRVLAIRLTNGSSLLISKSLKPTEAVMNKLRWVLLIVGGIGVAVAAVAGGMVTRAGLRPVGRLTEAAERVARTDDLRPIPVFGSDELARLTEAFNLMLRALAESRERQARLVTDAGHELRTPLTSLRTNVELLMASMAPGAPRLPKQEMVDLRADVLAQIEELSTLVGDLVDLSRGDAGEVVHEPVDMADVVDRSLERVRRRRNDILFDVEVIGWQVYGDTAGLSRMALNLMDNAAKWSPPGGHVGVRLSQLDASHAELVVSDRGPGIPVQERRLVFERFYRSASARALPGSGLGLAIVKQVVLNHGGLLRIEDTDPGGQPPGTSIYVLLPGRRMPIPQLPGATAGARSTDIENSRGSANVISVESQSTRAT</sequence>
<dbReference type="EC" id="2.7.13.3"/>
<dbReference type="EC" id="3.1.3.-"/>
<dbReference type="EMBL" id="CP000611">
    <property type="protein sequence ID" value="ABQ72724.1"/>
    <property type="molecule type" value="Genomic_DNA"/>
</dbReference>
<dbReference type="RefSeq" id="WP_003911317.1">
    <property type="nucleotide sequence ID" value="NZ_CP016972.1"/>
</dbReference>
<dbReference type="SMR" id="A5U124"/>
<dbReference type="KEGG" id="mra:MRA_0989"/>
<dbReference type="eggNOG" id="COG2205">
    <property type="taxonomic scope" value="Bacteria"/>
</dbReference>
<dbReference type="eggNOG" id="COG2972">
    <property type="taxonomic scope" value="Bacteria"/>
</dbReference>
<dbReference type="HOGENOM" id="CLU_000445_89_6_11"/>
<dbReference type="Proteomes" id="UP000001988">
    <property type="component" value="Chromosome"/>
</dbReference>
<dbReference type="GO" id="GO:0005886">
    <property type="term" value="C:plasma membrane"/>
    <property type="evidence" value="ECO:0007669"/>
    <property type="project" value="UniProtKB-SubCell"/>
</dbReference>
<dbReference type="GO" id="GO:0005524">
    <property type="term" value="F:ATP binding"/>
    <property type="evidence" value="ECO:0007669"/>
    <property type="project" value="UniProtKB-KW"/>
</dbReference>
<dbReference type="GO" id="GO:0004721">
    <property type="term" value="F:phosphoprotein phosphatase activity"/>
    <property type="evidence" value="ECO:0007669"/>
    <property type="project" value="UniProtKB-KW"/>
</dbReference>
<dbReference type="GO" id="GO:0000155">
    <property type="term" value="F:phosphorelay sensor kinase activity"/>
    <property type="evidence" value="ECO:0007669"/>
    <property type="project" value="InterPro"/>
</dbReference>
<dbReference type="CDD" id="cd06225">
    <property type="entry name" value="HAMP"/>
    <property type="match status" value="1"/>
</dbReference>
<dbReference type="CDD" id="cd00075">
    <property type="entry name" value="HATPase"/>
    <property type="match status" value="1"/>
</dbReference>
<dbReference type="CDD" id="cd00082">
    <property type="entry name" value="HisKA"/>
    <property type="match status" value="1"/>
</dbReference>
<dbReference type="FunFam" id="1.10.287.130:FF:000031">
    <property type="entry name" value="Two-component sensor histidine kinase"/>
    <property type="match status" value="1"/>
</dbReference>
<dbReference type="FunFam" id="3.30.565.10:FF:000066">
    <property type="entry name" value="Two-component sensor kinase MprB"/>
    <property type="match status" value="1"/>
</dbReference>
<dbReference type="Gene3D" id="1.10.287.130">
    <property type="match status" value="1"/>
</dbReference>
<dbReference type="Gene3D" id="6.10.340.10">
    <property type="match status" value="1"/>
</dbReference>
<dbReference type="Gene3D" id="3.30.565.10">
    <property type="entry name" value="Histidine kinase-like ATPase, C-terminal domain"/>
    <property type="match status" value="1"/>
</dbReference>
<dbReference type="InterPro" id="IPR050980">
    <property type="entry name" value="2C_sensor_his_kinase"/>
</dbReference>
<dbReference type="InterPro" id="IPR003660">
    <property type="entry name" value="HAMP_dom"/>
</dbReference>
<dbReference type="InterPro" id="IPR036890">
    <property type="entry name" value="HATPase_C_sf"/>
</dbReference>
<dbReference type="InterPro" id="IPR005467">
    <property type="entry name" value="His_kinase_dom"/>
</dbReference>
<dbReference type="InterPro" id="IPR003661">
    <property type="entry name" value="HisK_dim/P_dom"/>
</dbReference>
<dbReference type="InterPro" id="IPR036097">
    <property type="entry name" value="HisK_dim/P_sf"/>
</dbReference>
<dbReference type="InterPro" id="IPR004358">
    <property type="entry name" value="Sig_transdc_His_kin-like_C"/>
</dbReference>
<dbReference type="PANTHER" id="PTHR44936">
    <property type="entry name" value="SENSOR PROTEIN CREC"/>
    <property type="match status" value="1"/>
</dbReference>
<dbReference type="PANTHER" id="PTHR44936:SF9">
    <property type="entry name" value="SENSOR PROTEIN CREC"/>
    <property type="match status" value="1"/>
</dbReference>
<dbReference type="Pfam" id="PF00672">
    <property type="entry name" value="HAMP"/>
    <property type="match status" value="1"/>
</dbReference>
<dbReference type="Pfam" id="PF02518">
    <property type="entry name" value="HATPase_c"/>
    <property type="match status" value="1"/>
</dbReference>
<dbReference type="Pfam" id="PF00512">
    <property type="entry name" value="HisKA"/>
    <property type="match status" value="1"/>
</dbReference>
<dbReference type="PRINTS" id="PR00344">
    <property type="entry name" value="BCTRLSENSOR"/>
</dbReference>
<dbReference type="SMART" id="SM00304">
    <property type="entry name" value="HAMP"/>
    <property type="match status" value="1"/>
</dbReference>
<dbReference type="SMART" id="SM00387">
    <property type="entry name" value="HATPase_c"/>
    <property type="match status" value="1"/>
</dbReference>
<dbReference type="SMART" id="SM00388">
    <property type="entry name" value="HisKA"/>
    <property type="match status" value="1"/>
</dbReference>
<dbReference type="SUPFAM" id="SSF55874">
    <property type="entry name" value="ATPase domain of HSP90 chaperone/DNA topoisomerase II/histidine kinase"/>
    <property type="match status" value="1"/>
</dbReference>
<dbReference type="SUPFAM" id="SSF158472">
    <property type="entry name" value="HAMP domain-like"/>
    <property type="match status" value="1"/>
</dbReference>
<dbReference type="SUPFAM" id="SSF47384">
    <property type="entry name" value="Homodimeric domain of signal transducing histidine kinase"/>
    <property type="match status" value="1"/>
</dbReference>
<dbReference type="PROSITE" id="PS50885">
    <property type="entry name" value="HAMP"/>
    <property type="match status" value="1"/>
</dbReference>
<dbReference type="PROSITE" id="PS50109">
    <property type="entry name" value="HIS_KIN"/>
    <property type="match status" value="1"/>
</dbReference>
<reference key="1">
    <citation type="journal article" date="2008" name="PLoS ONE">
        <title>Genetic basis of virulence attenuation revealed by comparative genomic analysis of Mycobacterium tuberculosis strain H37Ra versus H37Rv.</title>
        <authorList>
            <person name="Zheng H."/>
            <person name="Lu L."/>
            <person name="Wang B."/>
            <person name="Pu S."/>
            <person name="Zhang X."/>
            <person name="Zhu G."/>
            <person name="Shi W."/>
            <person name="Zhang L."/>
            <person name="Wang H."/>
            <person name="Wang S."/>
            <person name="Zhao G."/>
            <person name="Zhang Y."/>
        </authorList>
    </citation>
    <scope>NUCLEOTIDE SEQUENCE [LARGE SCALE GENOMIC DNA]</scope>
    <source>
        <strain>ATCC 25177 / H37Ra</strain>
    </source>
</reference>
<protein>
    <recommendedName>
        <fullName>Signal transduction histidine-protein kinase/phosphatase MprB</fullName>
        <ecNumber>2.7.13.3</ecNumber>
        <ecNumber>3.1.3.-</ecNumber>
    </recommendedName>
    <alternativeName>
        <fullName>Mycobacterial persistence regulator B</fullName>
    </alternativeName>
</protein>
<feature type="chain" id="PRO_0000308441" description="Signal transduction histidine-protein kinase/phosphatase MprB">
    <location>
        <begin position="1"/>
        <end position="504"/>
    </location>
</feature>
<feature type="topological domain" description="Cytoplasmic" evidence="2">
    <location>
        <begin position="1"/>
        <end position="26"/>
    </location>
</feature>
<feature type="transmembrane region" description="Helical" evidence="2">
    <location>
        <begin position="27"/>
        <end position="47"/>
    </location>
</feature>
<feature type="topological domain" description="Extracellular" evidence="2">
    <location>
        <begin position="48"/>
        <end position="163"/>
    </location>
</feature>
<feature type="transmembrane region" description="Helical" evidence="2">
    <location>
        <begin position="164"/>
        <end position="184"/>
    </location>
</feature>
<feature type="topological domain" description="Cytoplasmic" evidence="2">
    <location>
        <begin position="185"/>
        <end position="504"/>
    </location>
</feature>
<feature type="domain" description="HAMP" evidence="3">
    <location>
        <begin position="186"/>
        <end position="238"/>
    </location>
</feature>
<feature type="domain" description="Histidine kinase" evidence="4">
    <location>
        <begin position="246"/>
        <end position="466"/>
    </location>
</feature>
<feature type="region of interest" description="Disordered" evidence="5">
    <location>
        <begin position="471"/>
        <end position="504"/>
    </location>
</feature>
<feature type="compositionally biased region" description="Polar residues" evidence="5">
    <location>
        <begin position="487"/>
        <end position="504"/>
    </location>
</feature>
<feature type="modified residue" description="Phosphohistidine; by autocatalysis" evidence="4">
    <location>
        <position position="249"/>
    </location>
</feature>
<gene>
    <name type="primary">mprB</name>
    <name type="ordered locus">MRA_0989</name>
</gene>